<organism>
    <name type="scientific">Haemophilus influenzae (strain ATCC 51907 / DSM 11121 / KW20 / Rd)</name>
    <dbReference type="NCBI Taxonomy" id="71421"/>
    <lineage>
        <taxon>Bacteria</taxon>
        <taxon>Pseudomonadati</taxon>
        <taxon>Pseudomonadota</taxon>
        <taxon>Gammaproteobacteria</taxon>
        <taxon>Pasteurellales</taxon>
        <taxon>Pasteurellaceae</taxon>
        <taxon>Haemophilus</taxon>
    </lineage>
</organism>
<sequence>MIRKLMKIPPFFTALFASAMFTLSVSQGVLAANSTNVLPTEQSLKADLANAQKMSEGEAKNRLLAELQTSIDLLQQIQAQQKINDALQTTLSHSESEIRKNNAEIQALKKQQETATSTDDNAQSQDYLQNSLTKLNDQLQDTQNALSTANAQLAGQSSISERAQAALTENVVRTQQINQQLANNDIGSTLRKQYQIDLQLIDLKNSYNQNLLKNNDQLSLLYQSRYNLLNLRLQVQQQNIIAIQEVINQKNLQQSQNQVEQAQQQQKTVQNDYIQKELDRNAQLGQYLLQQTEKANSLTQDELRMRNILDSLTQTQRTIDEQISALQGTLVLSRIIQQQKQKLPTNLNIQGLSKQIADLRVHIFDITQKRNELYDLDNYINKVESEDGKQFTEAERTQVKTLLTERRKMTSDLIKSLNNQLNLAISLELTQLQITQISDQIQSKLEQQSFWVKSNNPINLDWVKMLPRALIEQFNGMLKKLGFPTNYDNLPYLLMYFLGLFIVGGAIFKFKNRIKQQLNKINREIHRLDTDSQWSTPLALLLTAFLTLSSTLWFLAVCQMIGFFFFKNPEEFWHWSFSMAGYWWFFTFWISLFRPNGIFVNHFESSKENAQRFRGVIQRIIVVVVLLLNTSVFSNVTDAGLANDVLGQINTIAALIFCAAIIAPRFNRVLRSYEPETNKHHWLIRIVQIGFRLIPVGLIVLIVLGYYYTALNLIEHFIHSYIAWCVWWLVRNTIYRGITVSSRRLAHRRLAEKRRQKALENNYENISSDDVVAVGEPEESLALNDVRSQLLRFVDLFIWTALLGIFYYVWSDLVTVVSYLREITLWQQTTTTDAGTVMESITLFNLLVALVIVGITYVLVRNISGILEVLIFSRVNLSQGTPYTITTLLTYIFIAIGGAWAFATLGMSWSKLQWLFAALSVGLGFGMQEIFANFVSGIILLFERPIRVGDVVTINEVSGTVAKIRIRAITLIDFDRKEVIVPNKSFVTGQVTNWALSNTMTRLVISVGVAYGSDLTLVRQLLLQAADEQPTILRDPKPSAYFLTFGASTLDHELRVYVEQVGDRTSTTDALNRRINELFAEHNIDIAFNQLDVFIKNNDTGEEIPFVDVKK</sequence>
<gene>
    <name type="ordered locus">HI_0195.1</name>
</gene>
<name>Y195A_HAEIN</name>
<reference key="1">
    <citation type="journal article" date="1995" name="Science">
        <title>Whole-genome random sequencing and assembly of Haemophilus influenzae Rd.</title>
        <authorList>
            <person name="Fleischmann R.D."/>
            <person name="Adams M.D."/>
            <person name="White O."/>
            <person name="Clayton R.A."/>
            <person name="Kirkness E.F."/>
            <person name="Kerlavage A.R."/>
            <person name="Bult C.J."/>
            <person name="Tomb J.-F."/>
            <person name="Dougherty B.A."/>
            <person name="Merrick J.M."/>
            <person name="McKenney K."/>
            <person name="Sutton G.G."/>
            <person name="FitzHugh W."/>
            <person name="Fields C.A."/>
            <person name="Gocayne J.D."/>
            <person name="Scott J.D."/>
            <person name="Shirley R."/>
            <person name="Liu L.-I."/>
            <person name="Glodek A."/>
            <person name="Kelley J.M."/>
            <person name="Weidman J.F."/>
            <person name="Phillips C.A."/>
            <person name="Spriggs T."/>
            <person name="Hedblom E."/>
            <person name="Cotton M.D."/>
            <person name="Utterback T.R."/>
            <person name="Hanna M.C."/>
            <person name="Nguyen D.T."/>
            <person name="Saudek D.M."/>
            <person name="Brandon R.C."/>
            <person name="Fine L.D."/>
            <person name="Fritchman J.L."/>
            <person name="Fuhrmann J.L."/>
            <person name="Geoghagen N.S.M."/>
            <person name="Gnehm C.L."/>
            <person name="McDonald L.A."/>
            <person name="Small K.V."/>
            <person name="Fraser C.M."/>
            <person name="Smith H.O."/>
            <person name="Venter J.C."/>
        </authorList>
    </citation>
    <scope>NUCLEOTIDE SEQUENCE [LARGE SCALE GENOMIC DNA]</scope>
    <source>
        <strain>ATCC 51907 / DSM 11121 / KW20 / Rd</strain>
    </source>
</reference>
<reference key="2">
    <citation type="journal article" date="2000" name="Electrophoresis">
        <title>Two-dimensional map of the proteome of Haemophilus influenzae.</title>
        <authorList>
            <person name="Langen H."/>
            <person name="Takacs B."/>
            <person name="Evers S."/>
            <person name="Berndt P."/>
            <person name="Lahm H.W."/>
            <person name="Wipf B."/>
            <person name="Gray C."/>
            <person name="Fountoulakis M."/>
        </authorList>
    </citation>
    <scope>IDENTIFICATION BY MASS SPECTROMETRY</scope>
    <source>
        <strain>ATCC 51907 / DSM 11121 / KW20 / Rd</strain>
    </source>
</reference>
<evidence type="ECO:0000255" key="1"/>
<evidence type="ECO:0000305" key="2"/>
<protein>
    <recommendedName>
        <fullName>Uncharacterized MscS family protein HI_0195.1</fullName>
    </recommendedName>
</protein>
<dbReference type="EMBL" id="L42023">
    <property type="protein sequence ID" value="AAC21864.1"/>
    <property type="molecule type" value="Genomic_DNA"/>
</dbReference>
<dbReference type="RefSeq" id="NP_438364.1">
    <property type="nucleotide sequence ID" value="NC_000907.1"/>
</dbReference>
<dbReference type="SMR" id="Q57362"/>
<dbReference type="STRING" id="71421.HI_0195.1"/>
<dbReference type="EnsemblBacteria" id="AAC21864">
    <property type="protein sequence ID" value="AAC21864"/>
    <property type="gene ID" value="HI_0195.1"/>
</dbReference>
<dbReference type="KEGG" id="hin:HI_0195.1"/>
<dbReference type="PATRIC" id="fig|71421.8.peg.200"/>
<dbReference type="eggNOG" id="COG3096">
    <property type="taxonomic scope" value="Bacteria"/>
</dbReference>
<dbReference type="eggNOG" id="COG3264">
    <property type="taxonomic scope" value="Bacteria"/>
</dbReference>
<dbReference type="HOGENOM" id="CLU_007829_3_0_6"/>
<dbReference type="OrthoDB" id="9799209at2"/>
<dbReference type="PhylomeDB" id="Q57362"/>
<dbReference type="BioCyc" id="HINF71421:G1GJ1-206-MONOMER"/>
<dbReference type="Proteomes" id="UP000000579">
    <property type="component" value="Chromosome"/>
</dbReference>
<dbReference type="GO" id="GO:0005886">
    <property type="term" value="C:plasma membrane"/>
    <property type="evidence" value="ECO:0007669"/>
    <property type="project" value="UniProtKB-SubCell"/>
</dbReference>
<dbReference type="GO" id="GO:0008381">
    <property type="term" value="F:mechanosensitive monoatomic ion channel activity"/>
    <property type="evidence" value="ECO:0007669"/>
    <property type="project" value="UniProtKB-ARBA"/>
</dbReference>
<dbReference type="GO" id="GO:0009992">
    <property type="term" value="P:intracellular water homeostasis"/>
    <property type="evidence" value="ECO:0000318"/>
    <property type="project" value="GO_Central"/>
</dbReference>
<dbReference type="FunFam" id="1.10.287.1260:FF:000002">
    <property type="entry name" value="Potassium efflux system KefA"/>
    <property type="match status" value="1"/>
</dbReference>
<dbReference type="Gene3D" id="1.10.287.1260">
    <property type="match status" value="1"/>
</dbReference>
<dbReference type="Gene3D" id="2.30.30.60">
    <property type="match status" value="1"/>
</dbReference>
<dbReference type="Gene3D" id="3.30.70.100">
    <property type="match status" value="1"/>
</dbReference>
<dbReference type="InterPro" id="IPR010920">
    <property type="entry name" value="LSM_dom_sf"/>
</dbReference>
<dbReference type="InterPro" id="IPR049142">
    <property type="entry name" value="MS_channel_1st"/>
</dbReference>
<dbReference type="InterPro" id="IPR049278">
    <property type="entry name" value="MS_channel_C"/>
</dbReference>
<dbReference type="InterPro" id="IPR052702">
    <property type="entry name" value="MscS-like_channel"/>
</dbReference>
<dbReference type="InterPro" id="IPR023408">
    <property type="entry name" value="MscS_beta-dom_sf"/>
</dbReference>
<dbReference type="InterPro" id="IPR006685">
    <property type="entry name" value="MscS_channel_2nd"/>
</dbReference>
<dbReference type="InterPro" id="IPR011066">
    <property type="entry name" value="MscS_channel_C_sf"/>
</dbReference>
<dbReference type="InterPro" id="IPR006686">
    <property type="entry name" value="MscS_channel_CS"/>
</dbReference>
<dbReference type="InterPro" id="IPR011014">
    <property type="entry name" value="MscS_channel_TM-2"/>
</dbReference>
<dbReference type="InterPro" id="IPR025692">
    <property type="entry name" value="MscS_IM_dom1"/>
</dbReference>
<dbReference type="InterPro" id="IPR024393">
    <property type="entry name" value="MscS_porin"/>
</dbReference>
<dbReference type="NCBIfam" id="NF008438">
    <property type="entry name" value="PRK11281.1"/>
    <property type="match status" value="1"/>
</dbReference>
<dbReference type="PANTHER" id="PTHR30347:SF1">
    <property type="entry name" value="MECHANOSENSITIVE CHANNEL MSCK"/>
    <property type="match status" value="1"/>
</dbReference>
<dbReference type="PANTHER" id="PTHR30347">
    <property type="entry name" value="POTASSIUM CHANNEL RELATED"/>
    <property type="match status" value="1"/>
</dbReference>
<dbReference type="Pfam" id="PF21088">
    <property type="entry name" value="MS_channel_1st"/>
    <property type="match status" value="1"/>
</dbReference>
<dbReference type="Pfam" id="PF00924">
    <property type="entry name" value="MS_channel_2nd"/>
    <property type="match status" value="1"/>
</dbReference>
<dbReference type="Pfam" id="PF21082">
    <property type="entry name" value="MS_channel_3rd"/>
    <property type="match status" value="1"/>
</dbReference>
<dbReference type="Pfam" id="PF12795">
    <property type="entry name" value="MscS_porin"/>
    <property type="match status" value="1"/>
</dbReference>
<dbReference type="Pfam" id="PF12794">
    <property type="entry name" value="MscS_TM"/>
    <property type="match status" value="1"/>
</dbReference>
<dbReference type="SUPFAM" id="SSF82689">
    <property type="entry name" value="Mechanosensitive channel protein MscS (YggB), C-terminal domain"/>
    <property type="match status" value="1"/>
</dbReference>
<dbReference type="SUPFAM" id="SSF82861">
    <property type="entry name" value="Mechanosensitive channel protein MscS (YggB), transmembrane region"/>
    <property type="match status" value="1"/>
</dbReference>
<dbReference type="SUPFAM" id="SSF50182">
    <property type="entry name" value="Sm-like ribonucleoproteins"/>
    <property type="match status" value="1"/>
</dbReference>
<dbReference type="PROSITE" id="PS01246">
    <property type="entry name" value="UPF0003"/>
    <property type="match status" value="1"/>
</dbReference>
<accession>Q57362</accession>
<keyword id="KW-1003">Cell membrane</keyword>
<keyword id="KW-0472">Membrane</keyword>
<keyword id="KW-1185">Reference proteome</keyword>
<keyword id="KW-0732">Signal</keyword>
<keyword id="KW-0812">Transmembrane</keyword>
<keyword id="KW-1133">Transmembrane helix</keyword>
<feature type="signal peptide" evidence="1">
    <location>
        <begin position="1"/>
        <end position="31"/>
    </location>
</feature>
<feature type="chain" id="PRO_0000036181" description="Uncharacterized MscS family protein HI_0195.1">
    <location>
        <begin position="32"/>
        <end position="1111"/>
    </location>
</feature>
<feature type="transmembrane region" description="Helical" evidence="1">
    <location>
        <begin position="490"/>
        <end position="510"/>
    </location>
</feature>
<feature type="transmembrane region" description="Helical" evidence="1">
    <location>
        <begin position="538"/>
        <end position="558"/>
    </location>
</feature>
<feature type="transmembrane region" description="Helical" evidence="1">
    <location>
        <begin position="572"/>
        <end position="592"/>
    </location>
</feature>
<feature type="transmembrane region" description="Helical" evidence="1">
    <location>
        <begin position="620"/>
        <end position="640"/>
    </location>
</feature>
<feature type="transmembrane region" description="Helical" evidence="1">
    <location>
        <begin position="644"/>
        <end position="664"/>
    </location>
</feature>
<feature type="transmembrane region" description="Helical" evidence="1">
    <location>
        <begin position="694"/>
        <end position="714"/>
    </location>
</feature>
<feature type="transmembrane region" description="Helical" evidence="1">
    <location>
        <begin position="797"/>
        <end position="817"/>
    </location>
</feature>
<feature type="transmembrane region" description="Helical" evidence="1">
    <location>
        <begin position="840"/>
        <end position="860"/>
    </location>
</feature>
<feature type="transmembrane region" description="Helical" evidence="1">
    <location>
        <begin position="885"/>
        <end position="905"/>
    </location>
</feature>
<feature type="transmembrane region" description="Helical" evidence="1">
    <location>
        <begin position="922"/>
        <end position="942"/>
    </location>
</feature>
<feature type="transmembrane region" description="Helical" evidence="1">
    <location>
        <begin position="1003"/>
        <end position="1023"/>
    </location>
</feature>
<comment type="subcellular location">
    <subcellularLocation>
        <location evidence="2">Cell membrane</location>
        <topology evidence="2">Multi-pass membrane protein</topology>
    </subcellularLocation>
</comment>
<comment type="similarity">
    <text evidence="2">Belongs to the MscS (TC 1.A.23) family.</text>
</comment>
<proteinExistence type="evidence at protein level"/>